<comment type="function">
    <text evidence="2 8 9 10">Involved in membrane protein trafficking at the base of the ciliary organelle. Mediates recruitment onto plasma membrane of the BBSome complex which would constitute a coat complex required for sorting of specific membrane proteins to the primary cilia (PubMed:20603001). Together with BBS1, is necessary for correct trafficking of PKD1 to primary cilia (By similarity). Together with the BBSome complex and LTZL1, controls SMO ciliary trafficking and contributes to the sonic hedgehog (SHH) pathway regulation (PubMed:22072986). May regulate cilia assembly and disassembly and subsequent ciliary signaling events such as the Wnt signaling cascade (PubMed:20207729). Isoform 2 may be required for proper retinal function and organization (By similarity).</text>
</comment>
<comment type="subunit">
    <text evidence="8 9 12">Interacts with SEC61B, ARL6IP1, ARL6IP2, ARL6IP3, ARL6IP4 ARL6IP5 and ARL6IP6. Interacts (GTP-bound form) with the BBSome a complex that contains BBS1, BBS2, BBS4, BBS5, BBS7, BBS8/TTC8, BBS9 and BBIP10. Interacts (GTP-free form) with IFT27.</text>
</comment>
<comment type="interaction">
    <interactant intactId="EBI-2891949">
        <id>Q9H0F7</id>
    </interactant>
    <interactant intactId="EBI-1805484">
        <id>Q8NFJ9</id>
        <label>BBS1</label>
    </interactant>
    <organismsDiffer>false</organismsDiffer>
    <experiments>4</experiments>
</comment>
<comment type="interaction">
    <interactant intactId="EBI-16127759">
        <id>Q9H0F7-1</id>
    </interactant>
    <interactant intactId="EBI-1805484">
        <id>Q8NFJ9</id>
        <label>BBS1</label>
    </interactant>
    <organismsDiffer>false</organismsDiffer>
    <experiments>3</experiments>
</comment>
<comment type="subcellular location">
    <subcellularLocation>
        <location>Cell projection</location>
        <location>Cilium membrane</location>
        <topology>Peripheral membrane protein</topology>
        <orientation>Cytoplasmic side</orientation>
    </subcellularLocation>
    <subcellularLocation>
        <location>Cytoplasm</location>
        <location>Cytoskeleton</location>
        <location>Cilium axoneme</location>
    </subcellularLocation>
    <subcellularLocation>
        <location>Cytoplasm</location>
        <location>Cytoskeleton</location>
        <location>Cilium basal body</location>
    </subcellularLocation>
    <text>Appears in a pattern of punctae flanking the microtubule axoneme that likely correspond to small membrane-associated patches. Localizes to the so-called ciliary gate where vesicles carrying ciliary cargo fuse with the membrane.</text>
</comment>
<comment type="alternative products">
    <event type="alternative splicing"/>
    <isoform>
        <id>Q9H0F7-1</id>
        <name>1</name>
        <name>BBS3</name>
        <sequence type="displayed"/>
    </isoform>
    <isoform>
        <id>Q9H0F7-2</id>
        <name>2</name>
        <name>BBS3L</name>
        <sequence type="described" ref="VSP_040511"/>
    </isoform>
</comment>
<comment type="disease" evidence="4 5 11">
    <disease id="DI-00161">
        <name>Bardet-Biedl syndrome 3</name>
        <acronym>BBS3</acronym>
        <description>A syndrome characterized by usually severe pigmentary retinopathy, early-onset obesity, polydactyly, hypogenitalism, renal malformation and intellectual disability. Secondary features include diabetes mellitus, hypertension and congenital heart disease. Bardet-Biedl syndrome inheritance is autosomal recessive, but three mutated alleles (two at one locus, and a third at a second locus) may be required for clinical manifestation of some forms of the disease.</description>
        <dbReference type="MIM" id="600151"/>
    </disease>
    <text>The disease is caused by variants affecting the gene represented in this entry.</text>
</comment>
<comment type="disease" evidence="7">
    <disease id="DI-02896">
        <name>Retinitis pigmentosa 55</name>
        <acronym>RP55</acronym>
        <description>A retinal dystrophy belonging to the group of pigmentary retinopathies. Retinitis pigmentosa is characterized by retinal pigment deposits visible on fundus examination and primary loss of rod photoreceptor cells followed by secondary loss of cone photoreceptors. Patients typically have night vision blindness and loss of midperipheral visual field. As their condition progresses, they lose their far peripheral visual field and eventually central vision as well.</description>
        <dbReference type="MIM" id="613575"/>
    </disease>
    <text>The disease is caused by variants affecting the gene represented in this entry.</text>
</comment>
<comment type="similarity">
    <text evidence="13">Belongs to the small GTPase superfamily. Arf family.</text>
</comment>
<reference key="1">
    <citation type="journal article" date="2001" name="Genome Res.">
        <title>Towards a catalog of human genes and proteins: sequencing and analysis of 500 novel complete protein coding human cDNAs.</title>
        <authorList>
            <person name="Wiemann S."/>
            <person name="Weil B."/>
            <person name="Wellenreuther R."/>
            <person name="Gassenhuber J."/>
            <person name="Glassl S."/>
            <person name="Ansorge W."/>
            <person name="Boecher M."/>
            <person name="Bloecker H."/>
            <person name="Bauersachs S."/>
            <person name="Blum H."/>
            <person name="Lauber J."/>
            <person name="Duesterhoeft A."/>
            <person name="Beyer A."/>
            <person name="Koehrer K."/>
            <person name="Strack N."/>
            <person name="Mewes H.-W."/>
            <person name="Ottenwaelder B."/>
            <person name="Obermaier B."/>
            <person name="Tampe J."/>
            <person name="Heubner D."/>
            <person name="Wambutt R."/>
            <person name="Korn B."/>
            <person name="Klein M."/>
            <person name="Poustka A."/>
        </authorList>
    </citation>
    <scope>NUCLEOTIDE SEQUENCE [LARGE SCALE MRNA]</scope>
    <source>
        <tissue>Testis</tissue>
    </source>
</reference>
<reference key="2">
    <citation type="journal article" date="2004" name="Nat. Genet.">
        <title>Complete sequencing and characterization of 21,243 full-length human cDNAs.</title>
        <authorList>
            <person name="Ota T."/>
            <person name="Suzuki Y."/>
            <person name="Nishikawa T."/>
            <person name="Otsuki T."/>
            <person name="Sugiyama T."/>
            <person name="Irie R."/>
            <person name="Wakamatsu A."/>
            <person name="Hayashi K."/>
            <person name="Sato H."/>
            <person name="Nagai K."/>
            <person name="Kimura K."/>
            <person name="Makita H."/>
            <person name="Sekine M."/>
            <person name="Obayashi M."/>
            <person name="Nishi T."/>
            <person name="Shibahara T."/>
            <person name="Tanaka T."/>
            <person name="Ishii S."/>
            <person name="Yamamoto J."/>
            <person name="Saito K."/>
            <person name="Kawai Y."/>
            <person name="Isono Y."/>
            <person name="Nakamura Y."/>
            <person name="Nagahari K."/>
            <person name="Murakami K."/>
            <person name="Yasuda T."/>
            <person name="Iwayanagi T."/>
            <person name="Wagatsuma M."/>
            <person name="Shiratori A."/>
            <person name="Sudo H."/>
            <person name="Hosoiri T."/>
            <person name="Kaku Y."/>
            <person name="Kodaira H."/>
            <person name="Kondo H."/>
            <person name="Sugawara M."/>
            <person name="Takahashi M."/>
            <person name="Kanda K."/>
            <person name="Yokoi T."/>
            <person name="Furuya T."/>
            <person name="Kikkawa E."/>
            <person name="Omura Y."/>
            <person name="Abe K."/>
            <person name="Kamihara K."/>
            <person name="Katsuta N."/>
            <person name="Sato K."/>
            <person name="Tanikawa M."/>
            <person name="Yamazaki M."/>
            <person name="Ninomiya K."/>
            <person name="Ishibashi T."/>
            <person name="Yamashita H."/>
            <person name="Murakawa K."/>
            <person name="Fujimori K."/>
            <person name="Tanai H."/>
            <person name="Kimata M."/>
            <person name="Watanabe M."/>
            <person name="Hiraoka S."/>
            <person name="Chiba Y."/>
            <person name="Ishida S."/>
            <person name="Ono Y."/>
            <person name="Takiguchi S."/>
            <person name="Watanabe S."/>
            <person name="Yosida M."/>
            <person name="Hotuta T."/>
            <person name="Kusano J."/>
            <person name="Kanehori K."/>
            <person name="Takahashi-Fujii A."/>
            <person name="Hara H."/>
            <person name="Tanase T.-O."/>
            <person name="Nomura Y."/>
            <person name="Togiya S."/>
            <person name="Komai F."/>
            <person name="Hara R."/>
            <person name="Takeuchi K."/>
            <person name="Arita M."/>
            <person name="Imose N."/>
            <person name="Musashino K."/>
            <person name="Yuuki H."/>
            <person name="Oshima A."/>
            <person name="Sasaki N."/>
            <person name="Aotsuka S."/>
            <person name="Yoshikawa Y."/>
            <person name="Matsunawa H."/>
            <person name="Ichihara T."/>
            <person name="Shiohata N."/>
            <person name="Sano S."/>
            <person name="Moriya S."/>
            <person name="Momiyama H."/>
            <person name="Satoh N."/>
            <person name="Takami S."/>
            <person name="Terashima Y."/>
            <person name="Suzuki O."/>
            <person name="Nakagawa S."/>
            <person name="Senoh A."/>
            <person name="Mizoguchi H."/>
            <person name="Goto Y."/>
            <person name="Shimizu F."/>
            <person name="Wakebe H."/>
            <person name="Hishigaki H."/>
            <person name="Watanabe T."/>
            <person name="Sugiyama A."/>
            <person name="Takemoto M."/>
            <person name="Kawakami B."/>
            <person name="Yamazaki M."/>
            <person name="Watanabe K."/>
            <person name="Kumagai A."/>
            <person name="Itakura S."/>
            <person name="Fukuzumi Y."/>
            <person name="Fujimori Y."/>
            <person name="Komiyama M."/>
            <person name="Tashiro H."/>
            <person name="Tanigami A."/>
            <person name="Fujiwara T."/>
            <person name="Ono T."/>
            <person name="Yamada K."/>
            <person name="Fujii Y."/>
            <person name="Ozaki K."/>
            <person name="Hirao M."/>
            <person name="Ohmori Y."/>
            <person name="Kawabata A."/>
            <person name="Hikiji T."/>
            <person name="Kobatake N."/>
            <person name="Inagaki H."/>
            <person name="Ikema Y."/>
            <person name="Okamoto S."/>
            <person name="Okitani R."/>
            <person name="Kawakami T."/>
            <person name="Noguchi S."/>
            <person name="Itoh T."/>
            <person name="Shigeta K."/>
            <person name="Senba T."/>
            <person name="Matsumura K."/>
            <person name="Nakajima Y."/>
            <person name="Mizuno T."/>
            <person name="Morinaga M."/>
            <person name="Sasaki M."/>
            <person name="Togashi T."/>
            <person name="Oyama M."/>
            <person name="Hata H."/>
            <person name="Watanabe M."/>
            <person name="Komatsu T."/>
            <person name="Mizushima-Sugano J."/>
            <person name="Satoh T."/>
            <person name="Shirai Y."/>
            <person name="Takahashi Y."/>
            <person name="Nakagawa K."/>
            <person name="Okumura K."/>
            <person name="Nagase T."/>
            <person name="Nomura N."/>
            <person name="Kikuchi H."/>
            <person name="Masuho Y."/>
            <person name="Yamashita R."/>
            <person name="Nakai K."/>
            <person name="Yada T."/>
            <person name="Nakamura Y."/>
            <person name="Ohara O."/>
            <person name="Isogai T."/>
            <person name="Sugano S."/>
        </authorList>
    </citation>
    <scope>NUCLEOTIDE SEQUENCE [LARGE SCALE MRNA]</scope>
    <source>
        <tissue>Trachea</tissue>
    </source>
</reference>
<reference key="3">
    <citation type="journal article" date="2006" name="Nature">
        <title>The DNA sequence, annotation and analysis of human chromosome 3.</title>
        <authorList>
            <person name="Muzny D.M."/>
            <person name="Scherer S.E."/>
            <person name="Kaul R."/>
            <person name="Wang J."/>
            <person name="Yu J."/>
            <person name="Sudbrak R."/>
            <person name="Buhay C.J."/>
            <person name="Chen R."/>
            <person name="Cree A."/>
            <person name="Ding Y."/>
            <person name="Dugan-Rocha S."/>
            <person name="Gill R."/>
            <person name="Gunaratne P."/>
            <person name="Harris R.A."/>
            <person name="Hawes A.C."/>
            <person name="Hernandez J."/>
            <person name="Hodgson A.V."/>
            <person name="Hume J."/>
            <person name="Jackson A."/>
            <person name="Khan Z.M."/>
            <person name="Kovar-Smith C."/>
            <person name="Lewis L.R."/>
            <person name="Lozado R.J."/>
            <person name="Metzker M.L."/>
            <person name="Milosavljevic A."/>
            <person name="Miner G.R."/>
            <person name="Morgan M.B."/>
            <person name="Nazareth L.V."/>
            <person name="Scott G."/>
            <person name="Sodergren E."/>
            <person name="Song X.-Z."/>
            <person name="Steffen D."/>
            <person name="Wei S."/>
            <person name="Wheeler D.A."/>
            <person name="Wright M.W."/>
            <person name="Worley K.C."/>
            <person name="Yuan Y."/>
            <person name="Zhang Z."/>
            <person name="Adams C.Q."/>
            <person name="Ansari-Lari M.A."/>
            <person name="Ayele M."/>
            <person name="Brown M.J."/>
            <person name="Chen G."/>
            <person name="Chen Z."/>
            <person name="Clendenning J."/>
            <person name="Clerc-Blankenburg K.P."/>
            <person name="Chen R."/>
            <person name="Chen Z."/>
            <person name="Davis C."/>
            <person name="Delgado O."/>
            <person name="Dinh H.H."/>
            <person name="Dong W."/>
            <person name="Draper H."/>
            <person name="Ernst S."/>
            <person name="Fu G."/>
            <person name="Gonzalez-Garay M.L."/>
            <person name="Garcia D.K."/>
            <person name="Gillett W."/>
            <person name="Gu J."/>
            <person name="Hao B."/>
            <person name="Haugen E."/>
            <person name="Havlak P."/>
            <person name="He X."/>
            <person name="Hennig S."/>
            <person name="Hu S."/>
            <person name="Huang W."/>
            <person name="Jackson L.R."/>
            <person name="Jacob L.S."/>
            <person name="Kelly S.H."/>
            <person name="Kube M."/>
            <person name="Levy R."/>
            <person name="Li Z."/>
            <person name="Liu B."/>
            <person name="Liu J."/>
            <person name="Liu W."/>
            <person name="Lu J."/>
            <person name="Maheshwari M."/>
            <person name="Nguyen B.-V."/>
            <person name="Okwuonu G.O."/>
            <person name="Palmeiri A."/>
            <person name="Pasternak S."/>
            <person name="Perez L.M."/>
            <person name="Phelps K.A."/>
            <person name="Plopper F.J."/>
            <person name="Qiang B."/>
            <person name="Raymond C."/>
            <person name="Rodriguez R."/>
            <person name="Saenphimmachak C."/>
            <person name="Santibanez J."/>
            <person name="Shen H."/>
            <person name="Shen Y."/>
            <person name="Subramanian S."/>
            <person name="Tabor P.E."/>
            <person name="Verduzco D."/>
            <person name="Waldron L."/>
            <person name="Wang J."/>
            <person name="Wang J."/>
            <person name="Wang Q."/>
            <person name="Williams G.A."/>
            <person name="Wong G.K.-S."/>
            <person name="Yao Z."/>
            <person name="Zhang J."/>
            <person name="Zhang X."/>
            <person name="Zhao G."/>
            <person name="Zhou J."/>
            <person name="Zhou Y."/>
            <person name="Nelson D."/>
            <person name="Lehrach H."/>
            <person name="Reinhardt R."/>
            <person name="Naylor S.L."/>
            <person name="Yang H."/>
            <person name="Olson M."/>
            <person name="Weinstock G."/>
            <person name="Gibbs R.A."/>
        </authorList>
    </citation>
    <scope>NUCLEOTIDE SEQUENCE [LARGE SCALE GENOMIC DNA]</scope>
</reference>
<reference key="4">
    <citation type="submission" date="2005-09" db="EMBL/GenBank/DDBJ databases">
        <authorList>
            <person name="Mural R.J."/>
            <person name="Istrail S."/>
            <person name="Sutton G.G."/>
            <person name="Florea L."/>
            <person name="Halpern A.L."/>
            <person name="Mobarry C.M."/>
            <person name="Lippert R."/>
            <person name="Walenz B."/>
            <person name="Shatkay H."/>
            <person name="Dew I."/>
            <person name="Miller J.R."/>
            <person name="Flanigan M.J."/>
            <person name="Edwards N.J."/>
            <person name="Bolanos R."/>
            <person name="Fasulo D."/>
            <person name="Halldorsson B.V."/>
            <person name="Hannenhalli S."/>
            <person name="Turner R."/>
            <person name="Yooseph S."/>
            <person name="Lu F."/>
            <person name="Nusskern D.R."/>
            <person name="Shue B.C."/>
            <person name="Zheng X.H."/>
            <person name="Zhong F."/>
            <person name="Delcher A.L."/>
            <person name="Huson D.H."/>
            <person name="Kravitz S.A."/>
            <person name="Mouchard L."/>
            <person name="Reinert K."/>
            <person name="Remington K.A."/>
            <person name="Clark A.G."/>
            <person name="Waterman M.S."/>
            <person name="Eichler E.E."/>
            <person name="Adams M.D."/>
            <person name="Hunkapiller M.W."/>
            <person name="Myers E.W."/>
            <person name="Venter J.C."/>
        </authorList>
    </citation>
    <scope>NUCLEOTIDE SEQUENCE [LARGE SCALE GENOMIC DNA]</scope>
</reference>
<reference key="5">
    <citation type="journal article" date="2004" name="Genome Res.">
        <title>The status, quality, and expansion of the NIH full-length cDNA project: the Mammalian Gene Collection (MGC).</title>
        <authorList>
            <consortium name="The MGC Project Team"/>
        </authorList>
    </citation>
    <scope>NUCLEOTIDE SEQUENCE [LARGE SCALE MRNA]</scope>
    <source>
        <tissue>Testis</tissue>
    </source>
</reference>
<reference key="6">
    <citation type="journal article" date="2004" name="Am. J. Hum. Genet.">
        <title>Comparative genomic analysis identifies an ADP-ribosylation factor-like gene as the cause of Bardet-Biedl Syndrome (BBS3).</title>
        <authorList>
            <person name="Chiang A.P."/>
            <person name="Nishimura D."/>
            <person name="Searby C."/>
            <person name="Elbedour K."/>
            <person name="Carmi R."/>
            <person name="Ferguson A.L."/>
            <person name="Secrist J."/>
            <person name="Braun T."/>
            <person name="Casavant T."/>
            <person name="Stone E.M."/>
            <person name="Sheffield V.C."/>
        </authorList>
    </citation>
    <scope>INVOLVEMENT IN BBS3</scope>
</reference>
<reference key="7">
    <citation type="journal article" date="2010" name="Cell">
        <title>The conserved Bardet-Biedl syndrome proteins assemble a coat that traffics membrane proteins to cilia.</title>
        <authorList>
            <person name="Jin H."/>
            <person name="White S.R."/>
            <person name="Shida T."/>
            <person name="Schulz S."/>
            <person name="Aguiar M."/>
            <person name="Gygi S.P."/>
            <person name="Bazan J.F."/>
            <person name="Nachury M.V."/>
        </authorList>
    </citation>
    <scope>FUNCTION</scope>
    <scope>SUBCELLULAR LOCATION</scope>
    <scope>INTERACTION WITH THE BBSOME</scope>
</reference>
<reference key="8">
    <citation type="journal article" date="2010" name="PLoS Genet.">
        <title>Identification and functional analysis of the vision-specific BBS3 (ARL6) long isoform.</title>
        <authorList>
            <person name="Pretorius P.R."/>
            <person name="Baye L.M."/>
            <person name="Nishimura D.Y."/>
            <person name="Searby C.C."/>
            <person name="Bugge K."/>
            <person name="Yang B."/>
            <person name="Mullins R.F."/>
            <person name="Stone E.M."/>
            <person name="Sheffield V.C."/>
            <person name="Slusarski D.C."/>
        </authorList>
    </citation>
    <scope>ALTERNATIVE SPLICING (ISOFORM 2)</scope>
</reference>
<reference key="9">
    <citation type="journal article" date="2011" name="BMC Syst. Biol.">
        <title>Initial characterization of the human central proteome.</title>
        <authorList>
            <person name="Burkard T.R."/>
            <person name="Planyavsky M."/>
            <person name="Kaupe I."/>
            <person name="Breitwieser F.P."/>
            <person name="Buerckstuemmer T."/>
            <person name="Bennett K.L."/>
            <person name="Superti-Furga G."/>
            <person name="Colinge J."/>
        </authorList>
    </citation>
    <scope>IDENTIFICATION BY MASS SPECTROMETRY [LARGE SCALE ANALYSIS]</scope>
</reference>
<reference key="10">
    <citation type="journal article" date="2011" name="PLoS Genet.">
        <title>A novel protein LZTFL1 regulates ciliary trafficking of the BBSome and Smoothened.</title>
        <authorList>
            <person name="Seo S."/>
            <person name="Zhang Q."/>
            <person name="Bugge K."/>
            <person name="Breslow D.K."/>
            <person name="Searby C.C."/>
            <person name="Nachury M.V."/>
            <person name="Sheffield V.C."/>
        </authorList>
    </citation>
    <scope>FUNCTION</scope>
</reference>
<reference key="11">
    <citation type="journal article" date="2014" name="Dev. Cell">
        <title>The intraflagellar transport protein IFT27 promotes BBSome exit from cilia through the GTPase ARL6/BBS3.</title>
        <authorList>
            <person name="Liew G.M."/>
            <person name="Ye F."/>
            <person name="Nager A.R."/>
            <person name="Murphy J.P."/>
            <person name="Lee J.S."/>
            <person name="Aguiar M."/>
            <person name="Breslow D.K."/>
            <person name="Gygi S.P."/>
            <person name="Nachury M.V."/>
        </authorList>
    </citation>
    <scope>INTERACTION WITH IFT27</scope>
</reference>
<reference key="12">
    <citation type="journal article" date="2010" name="J. Biol. Chem.">
        <title>Bardet-Biedl syndrome-associated small GTPase ARL6 (BBS3) functions at or near the ciliary gate and modulates Wnt signaling.</title>
        <authorList>
            <person name="Wiens C.J."/>
            <person name="Tong Y."/>
            <person name="Esmail M.A."/>
            <person name="Oh E."/>
            <person name="Gerdes J.M."/>
            <person name="Wang J."/>
            <person name="Tempel W."/>
            <person name="Rattner J.B."/>
            <person name="Katsanis N."/>
            <person name="Park H.W."/>
            <person name="Leroux M.R."/>
        </authorList>
    </citation>
    <scope>X-RAY CRYSTALLOGRAPHY (2.0 ANGSTROMS) OF 16-186 IN COMPLEX WITH GTP AND MAGNESIUM</scope>
    <scope>FUNCTION</scope>
    <scope>SUBCELLULAR LOCATION</scope>
    <scope>CHARACTERIZATION OF VARIANTS MET-31; ARG-31; ALA-169 AND TRP-170</scope>
</reference>
<reference key="13">
    <citation type="journal article" date="2004" name="Nat. Genet.">
        <title>Mutations in a member of the Ras superfamily of small GTP-binding proteins causes Bardet-Biedl syndrome.</title>
        <authorList>
            <person name="Fan Y."/>
            <person name="Esmail M.A."/>
            <person name="Ansley S.J."/>
            <person name="Blacque O.E."/>
            <person name="Boroevich K."/>
            <person name="Ross A.J."/>
            <person name="Moore S.J."/>
            <person name="Badano J.L."/>
            <person name="May-Simera H."/>
            <person name="Compton D.S."/>
            <person name="Green J.S."/>
            <person name="Lewis R.A."/>
            <person name="van Haelst M.M."/>
            <person name="Parfrey P.S."/>
            <person name="Baillie D.L."/>
            <person name="Beales P.L."/>
            <person name="Katsanis N."/>
            <person name="Davidson W.S."/>
            <person name="Leroux M.R."/>
        </authorList>
    </citation>
    <scope>VARIANTS BBS3 ARG-31; MET-31; ALA-169 AND TRP-170</scope>
</reference>
<reference key="14">
    <citation type="journal article" date="2009" name="Biochem. Biophys. Res. Commun.">
        <title>Biochemical characterization of missense mutations in the Arf/Arl-family small GTPase Arl6 causing Bardet-Biedl syndrome.</title>
        <authorList>
            <person name="Kobayashi T."/>
            <person name="Hori Y."/>
            <person name="Ueda N."/>
            <person name="Kajiho H."/>
            <person name="Muraoka S."/>
            <person name="Shima F."/>
            <person name="Kataoka T."/>
            <person name="Kontani K."/>
            <person name="Katada T."/>
        </authorList>
    </citation>
    <scope>CHARACTERIZATION OF VARIANTS MET-31; ARG-31; ALA-169 AND TRP-170</scope>
</reference>
<reference key="15">
    <citation type="journal article" date="2009" name="Mol. Vis.">
        <title>Molecular characterization of retinitis pigmentosa in Saudi Arabia.</title>
        <authorList>
            <person name="Aldahmesh M.A."/>
            <person name="Safieh L.A."/>
            <person name="Alkuraya H."/>
            <person name="Al-Rajhi A."/>
            <person name="Shamseldin H."/>
            <person name="Hashem M."/>
            <person name="Alzahrani F."/>
            <person name="Khan A.O."/>
            <person name="Alqahtani F."/>
            <person name="Rahbeeni Z."/>
            <person name="Alowain M."/>
            <person name="Khalak H."/>
            <person name="Al-Hazzaa S."/>
            <person name="Meyer B.F."/>
            <person name="Alkuraya F.S."/>
        </authorList>
    </citation>
    <scope>VARIANT RP55 VAL-89</scope>
</reference>
<reference key="16">
    <citation type="journal article" date="2013" name="Gene">
        <title>Novel homozygous mutations in the genes ARL6 and BBS10 underlying Bardet-Biedl syndrome.</title>
        <authorList>
            <person name="Khan S."/>
            <person name="Ullah I."/>
            <person name="Irfanullah X."/>
            <person name="Touseef M."/>
            <person name="Basit S."/>
            <person name="Khan M.N."/>
            <person name="Ahmad W."/>
        </authorList>
    </citation>
    <scope>VARIANT BBS3 THR-94</scope>
</reference>
<proteinExistence type="evidence at protein level"/>
<keyword id="KW-0002">3D-structure</keyword>
<keyword id="KW-0025">Alternative splicing</keyword>
<keyword id="KW-0083">Bardet-Biedl syndrome</keyword>
<keyword id="KW-1003">Cell membrane</keyword>
<keyword id="KW-0966">Cell projection</keyword>
<keyword id="KW-1186">Ciliopathy</keyword>
<keyword id="KW-0970">Cilium biogenesis/degradation</keyword>
<keyword id="KW-0963">Cytoplasm</keyword>
<keyword id="KW-0206">Cytoskeleton</keyword>
<keyword id="KW-0225">Disease variant</keyword>
<keyword id="KW-0342">GTP-binding</keyword>
<keyword id="KW-0991">Intellectual disability</keyword>
<keyword id="KW-0449">Lipoprotein</keyword>
<keyword id="KW-0460">Magnesium</keyword>
<keyword id="KW-0472">Membrane</keyword>
<keyword id="KW-0479">Metal-binding</keyword>
<keyword id="KW-0519">Myristate</keyword>
<keyword id="KW-0547">Nucleotide-binding</keyword>
<keyword id="KW-0550">Obesity</keyword>
<keyword id="KW-0653">Protein transport</keyword>
<keyword id="KW-1267">Proteomics identification</keyword>
<keyword id="KW-1185">Reference proteome</keyword>
<keyword id="KW-0682">Retinitis pigmentosa</keyword>
<keyword id="KW-0716">Sensory transduction</keyword>
<keyword id="KW-0813">Transport</keyword>
<keyword id="KW-0844">Vision</keyword>
<dbReference type="EMBL" id="AL136815">
    <property type="protein sequence ID" value="CAB66749.1"/>
    <property type="molecule type" value="mRNA"/>
</dbReference>
<dbReference type="EMBL" id="AK292958">
    <property type="protein sequence ID" value="BAF85647.1"/>
    <property type="molecule type" value="mRNA"/>
</dbReference>
<dbReference type="EMBL" id="AC110491">
    <property type="status" value="NOT_ANNOTATED_CDS"/>
    <property type="molecule type" value="Genomic_DNA"/>
</dbReference>
<dbReference type="EMBL" id="CH471052">
    <property type="protein sequence ID" value="EAW79880.1"/>
    <property type="molecule type" value="Genomic_DNA"/>
</dbReference>
<dbReference type="EMBL" id="CH471052">
    <property type="protein sequence ID" value="EAW79881.1"/>
    <property type="molecule type" value="Genomic_DNA"/>
</dbReference>
<dbReference type="EMBL" id="CH471052">
    <property type="protein sequence ID" value="EAW79882.1"/>
    <property type="molecule type" value="Genomic_DNA"/>
</dbReference>
<dbReference type="EMBL" id="CH471052">
    <property type="protein sequence ID" value="EAW79883.1"/>
    <property type="molecule type" value="Genomic_DNA"/>
</dbReference>
<dbReference type="EMBL" id="CH471052">
    <property type="protein sequence ID" value="EAW79884.1"/>
    <property type="molecule type" value="Genomic_DNA"/>
</dbReference>
<dbReference type="EMBL" id="BC024239">
    <property type="protein sequence ID" value="AAH24239.1"/>
    <property type="molecule type" value="mRNA"/>
</dbReference>
<dbReference type="CCDS" id="CCDS2928.1">
    <molecule id="Q9H0F7-1"/>
</dbReference>
<dbReference type="CCDS" id="CCDS93329.1">
    <molecule id="Q9H0F7-2"/>
</dbReference>
<dbReference type="RefSeq" id="NP_001265222.1">
    <molecule id="Q9H0F7-1"/>
    <property type="nucleotide sequence ID" value="NM_001278293.3"/>
</dbReference>
<dbReference type="RefSeq" id="NP_001310442.1">
    <molecule id="Q9H0F7-2"/>
    <property type="nucleotide sequence ID" value="NM_001323513.2"/>
</dbReference>
<dbReference type="RefSeq" id="NP_115522.1">
    <molecule id="Q9H0F7-1"/>
    <property type="nucleotide sequence ID" value="NM_032146.5"/>
</dbReference>
<dbReference type="RefSeq" id="NP_816931.1">
    <molecule id="Q9H0F7-1"/>
    <property type="nucleotide sequence ID" value="NM_177976.3"/>
</dbReference>
<dbReference type="RefSeq" id="XP_016862800.1">
    <molecule id="Q9H0F7-1"/>
    <property type="nucleotide sequence ID" value="XM_017007311.3"/>
</dbReference>
<dbReference type="RefSeq" id="XP_054204056.1">
    <molecule id="Q9H0F7-1"/>
    <property type="nucleotide sequence ID" value="XM_054348081.1"/>
</dbReference>
<dbReference type="PDB" id="2H57">
    <property type="method" value="X-ray"/>
    <property type="resolution" value="2.00 A"/>
    <property type="chains" value="A/B/C=16-186"/>
</dbReference>
<dbReference type="PDBsum" id="2H57"/>
<dbReference type="SMR" id="Q9H0F7"/>
<dbReference type="BioGRID" id="123889">
    <property type="interactions" value="35"/>
</dbReference>
<dbReference type="DIP" id="DIP-61535N"/>
<dbReference type="FunCoup" id="Q9H0F7">
    <property type="interactions" value="316"/>
</dbReference>
<dbReference type="IntAct" id="Q9H0F7">
    <property type="interactions" value="22"/>
</dbReference>
<dbReference type="STRING" id="9606.ENSP00000419619"/>
<dbReference type="iPTMnet" id="Q9H0F7"/>
<dbReference type="PhosphoSitePlus" id="Q9H0F7"/>
<dbReference type="BioMuta" id="ARL6"/>
<dbReference type="DMDM" id="14547903"/>
<dbReference type="jPOST" id="Q9H0F7"/>
<dbReference type="MassIVE" id="Q9H0F7"/>
<dbReference type="PaxDb" id="9606-ENSP00000337722"/>
<dbReference type="PeptideAtlas" id="Q9H0F7"/>
<dbReference type="ProteomicsDB" id="80274">
    <molecule id="Q9H0F7-1"/>
</dbReference>
<dbReference type="ProteomicsDB" id="80275">
    <molecule id="Q9H0F7-2"/>
</dbReference>
<dbReference type="Pumba" id="Q9H0F7"/>
<dbReference type="ABCD" id="Q9H0F7">
    <property type="antibodies" value="1 sequenced antibody"/>
</dbReference>
<dbReference type="Antibodypedia" id="15743">
    <property type="antibodies" value="126 antibodies from 29 providers"/>
</dbReference>
<dbReference type="DNASU" id="84100"/>
<dbReference type="Ensembl" id="ENST00000335979.6">
    <molecule id="Q9H0F7-1"/>
    <property type="protein sequence ID" value="ENSP00000337722.2"/>
    <property type="gene ID" value="ENSG00000113966.11"/>
</dbReference>
<dbReference type="Ensembl" id="ENST00000462412.3">
    <molecule id="Q9H0F7-1"/>
    <property type="protein sequence ID" value="ENSP00000418740.2"/>
    <property type="gene ID" value="ENSG00000113966.11"/>
</dbReference>
<dbReference type="Ensembl" id="ENST00000463745.6">
    <molecule id="Q9H0F7-1"/>
    <property type="protein sequence ID" value="ENSP00000419619.1"/>
    <property type="gene ID" value="ENSG00000113966.11"/>
</dbReference>
<dbReference type="Ensembl" id="ENST00000493990.5">
    <molecule id="Q9H0F7-1"/>
    <property type="protein sequence ID" value="ENSP00000418057.1"/>
    <property type="gene ID" value="ENSG00000113966.11"/>
</dbReference>
<dbReference type="Ensembl" id="ENST00000631834.2">
    <molecule id="Q9H0F7-2"/>
    <property type="protein sequence ID" value="ENSP00000488530.2"/>
    <property type="gene ID" value="ENSG00000113966.11"/>
</dbReference>
<dbReference type="GeneID" id="84100"/>
<dbReference type="KEGG" id="hsa:84100"/>
<dbReference type="MANE-Select" id="ENST00000463745.6">
    <property type="protein sequence ID" value="ENSP00000419619.1"/>
    <property type="RefSeq nucleotide sequence ID" value="NM_001278293.3"/>
    <property type="RefSeq protein sequence ID" value="NP_001265222.1"/>
</dbReference>
<dbReference type="UCSC" id="uc003dru.4">
    <molecule id="Q9H0F7-1"/>
    <property type="organism name" value="human"/>
</dbReference>
<dbReference type="AGR" id="HGNC:13210"/>
<dbReference type="CTD" id="84100"/>
<dbReference type="DisGeNET" id="84100"/>
<dbReference type="GeneCards" id="ARL6"/>
<dbReference type="GeneReviews" id="ARL6"/>
<dbReference type="HGNC" id="HGNC:13210">
    <property type="gene designation" value="ARL6"/>
</dbReference>
<dbReference type="HPA" id="ENSG00000113966">
    <property type="expression patterns" value="Tissue enhanced (retina)"/>
</dbReference>
<dbReference type="MalaCards" id="ARL6"/>
<dbReference type="MIM" id="600151">
    <property type="type" value="phenotype"/>
</dbReference>
<dbReference type="MIM" id="608845">
    <property type="type" value="gene"/>
</dbReference>
<dbReference type="MIM" id="613575">
    <property type="type" value="phenotype"/>
</dbReference>
<dbReference type="neXtProt" id="NX_Q9H0F7"/>
<dbReference type="OpenTargets" id="ENSG00000113966"/>
<dbReference type="Orphanet" id="110">
    <property type="disease" value="Bardet-Biedl syndrome"/>
</dbReference>
<dbReference type="Orphanet" id="791">
    <property type="disease" value="Retinitis pigmentosa"/>
</dbReference>
<dbReference type="PharmGKB" id="PA134931939"/>
<dbReference type="VEuPathDB" id="HostDB:ENSG00000113966"/>
<dbReference type="eggNOG" id="KOG0070">
    <property type="taxonomic scope" value="Eukaryota"/>
</dbReference>
<dbReference type="GeneTree" id="ENSGT00940000156459"/>
<dbReference type="HOGENOM" id="CLU_040729_9_1_1"/>
<dbReference type="InParanoid" id="Q9H0F7"/>
<dbReference type="OMA" id="NKPWHIC"/>
<dbReference type="OrthoDB" id="442317at2759"/>
<dbReference type="PAN-GO" id="Q9H0F7">
    <property type="GO annotations" value="7 GO annotations based on evolutionary models"/>
</dbReference>
<dbReference type="PhylomeDB" id="Q9H0F7"/>
<dbReference type="TreeFam" id="TF105466"/>
<dbReference type="PathwayCommons" id="Q9H0F7"/>
<dbReference type="Reactome" id="R-HSA-5620922">
    <property type="pathway name" value="BBSome-mediated cargo-targeting to cilium"/>
</dbReference>
<dbReference type="SignaLink" id="Q9H0F7"/>
<dbReference type="BioGRID-ORCS" id="84100">
    <property type="hits" value="11 hits in 1149 CRISPR screens"/>
</dbReference>
<dbReference type="ChiTaRS" id="ARL6">
    <property type="organism name" value="human"/>
</dbReference>
<dbReference type="EvolutionaryTrace" id="Q9H0F7"/>
<dbReference type="GeneWiki" id="ARL6"/>
<dbReference type="GenomeRNAi" id="84100"/>
<dbReference type="Pharos" id="Q9H0F7">
    <property type="development level" value="Tbio"/>
</dbReference>
<dbReference type="PRO" id="PR:Q9H0F7"/>
<dbReference type="Proteomes" id="UP000005640">
    <property type="component" value="Chromosome 3"/>
</dbReference>
<dbReference type="RNAct" id="Q9H0F7">
    <property type="molecule type" value="protein"/>
</dbReference>
<dbReference type="Bgee" id="ENSG00000113966">
    <property type="expression patterns" value="Expressed in oviduct epithelium and 165 other cell types or tissues"/>
</dbReference>
<dbReference type="ExpressionAtlas" id="Q9H0F7">
    <property type="expression patterns" value="baseline and differential"/>
</dbReference>
<dbReference type="GO" id="GO:0005879">
    <property type="term" value="C:axonemal microtubule"/>
    <property type="evidence" value="ECO:0000250"/>
    <property type="project" value="UniProtKB"/>
</dbReference>
<dbReference type="GO" id="GO:0005930">
    <property type="term" value="C:axoneme"/>
    <property type="evidence" value="ECO:0000250"/>
    <property type="project" value="UniProtKB"/>
</dbReference>
<dbReference type="GO" id="GO:0005929">
    <property type="term" value="C:cilium"/>
    <property type="evidence" value="ECO:0000314"/>
    <property type="project" value="HPA"/>
</dbReference>
<dbReference type="GO" id="GO:0005737">
    <property type="term" value="C:cytoplasm"/>
    <property type="evidence" value="ECO:0000250"/>
    <property type="project" value="UniProtKB"/>
</dbReference>
<dbReference type="GO" id="GO:0005829">
    <property type="term" value="C:cytosol"/>
    <property type="evidence" value="ECO:0000314"/>
    <property type="project" value="HPA"/>
</dbReference>
<dbReference type="GO" id="GO:0070062">
    <property type="term" value="C:extracellular exosome"/>
    <property type="evidence" value="ECO:0007005"/>
    <property type="project" value="UniProtKB"/>
</dbReference>
<dbReference type="GO" id="GO:0043231">
    <property type="term" value="C:intracellular membrane-bounded organelle"/>
    <property type="evidence" value="ECO:0000314"/>
    <property type="project" value="HPA"/>
</dbReference>
<dbReference type="GO" id="GO:0016020">
    <property type="term" value="C:membrane"/>
    <property type="evidence" value="ECO:0000250"/>
    <property type="project" value="UniProtKB"/>
</dbReference>
<dbReference type="GO" id="GO:0030117">
    <property type="term" value="C:membrane coat"/>
    <property type="evidence" value="ECO:0000250"/>
    <property type="project" value="UniProtKB"/>
</dbReference>
<dbReference type="GO" id="GO:0015630">
    <property type="term" value="C:microtubule cytoskeleton"/>
    <property type="evidence" value="ECO:0000314"/>
    <property type="project" value="HPA"/>
</dbReference>
<dbReference type="GO" id="GO:0005654">
    <property type="term" value="C:nucleoplasm"/>
    <property type="evidence" value="ECO:0000314"/>
    <property type="project" value="HPA"/>
</dbReference>
<dbReference type="GO" id="GO:0005886">
    <property type="term" value="C:plasma membrane"/>
    <property type="evidence" value="ECO:0000304"/>
    <property type="project" value="Reactome"/>
</dbReference>
<dbReference type="GO" id="GO:0005525">
    <property type="term" value="F:GTP binding"/>
    <property type="evidence" value="ECO:0000318"/>
    <property type="project" value="GO_Central"/>
</dbReference>
<dbReference type="GO" id="GO:0003924">
    <property type="term" value="F:GTPase activity"/>
    <property type="evidence" value="ECO:0007669"/>
    <property type="project" value="InterPro"/>
</dbReference>
<dbReference type="GO" id="GO:0046872">
    <property type="term" value="F:metal ion binding"/>
    <property type="evidence" value="ECO:0007669"/>
    <property type="project" value="UniProtKB-KW"/>
</dbReference>
<dbReference type="GO" id="GO:0005543">
    <property type="term" value="F:phospholipid binding"/>
    <property type="evidence" value="ECO:0000250"/>
    <property type="project" value="UniProtKB"/>
</dbReference>
<dbReference type="GO" id="GO:0007420">
    <property type="term" value="P:brain development"/>
    <property type="evidence" value="ECO:0007669"/>
    <property type="project" value="Ensembl"/>
</dbReference>
<dbReference type="GO" id="GO:0060271">
    <property type="term" value="P:cilium assembly"/>
    <property type="evidence" value="ECO:0000315"/>
    <property type="project" value="UniProtKB"/>
</dbReference>
<dbReference type="GO" id="GO:0007368">
    <property type="term" value="P:determination of left/right symmetry"/>
    <property type="evidence" value="ECO:0000250"/>
    <property type="project" value="BHF-UCL"/>
</dbReference>
<dbReference type="GO" id="GO:0045444">
    <property type="term" value="P:fat cell differentiation"/>
    <property type="evidence" value="ECO:0007669"/>
    <property type="project" value="Ensembl"/>
</dbReference>
<dbReference type="GO" id="GO:0006886">
    <property type="term" value="P:intracellular protein transport"/>
    <property type="evidence" value="ECO:0000318"/>
    <property type="project" value="GO_Central"/>
</dbReference>
<dbReference type="GO" id="GO:0032402">
    <property type="term" value="P:melanosome transport"/>
    <property type="evidence" value="ECO:0000250"/>
    <property type="project" value="BHF-UCL"/>
</dbReference>
<dbReference type="GO" id="GO:0061512">
    <property type="term" value="P:protein localization to cilium"/>
    <property type="evidence" value="ECO:0000315"/>
    <property type="project" value="MGI"/>
</dbReference>
<dbReference type="GO" id="GO:0097499">
    <property type="term" value="P:protein localization to non-motile cilium"/>
    <property type="evidence" value="ECO:0007669"/>
    <property type="project" value="Ensembl"/>
</dbReference>
<dbReference type="GO" id="GO:0051258">
    <property type="term" value="P:protein polymerization"/>
    <property type="evidence" value="ECO:0000250"/>
    <property type="project" value="UniProtKB"/>
</dbReference>
<dbReference type="GO" id="GO:0006612">
    <property type="term" value="P:protein targeting to membrane"/>
    <property type="evidence" value="ECO:0000250"/>
    <property type="project" value="UniProtKB"/>
</dbReference>
<dbReference type="GO" id="GO:1903445">
    <property type="term" value="P:protein transport from ciliary membrane to plasma membrane"/>
    <property type="evidence" value="ECO:0007669"/>
    <property type="project" value="Ensembl"/>
</dbReference>
<dbReference type="GO" id="GO:0008589">
    <property type="term" value="P:regulation of smoothened signaling pathway"/>
    <property type="evidence" value="ECO:0007669"/>
    <property type="project" value="Ensembl"/>
</dbReference>
<dbReference type="GO" id="GO:0010842">
    <property type="term" value="P:retina layer formation"/>
    <property type="evidence" value="ECO:0007669"/>
    <property type="project" value="Ensembl"/>
</dbReference>
<dbReference type="GO" id="GO:0016192">
    <property type="term" value="P:vesicle-mediated transport"/>
    <property type="evidence" value="ECO:0000318"/>
    <property type="project" value="GO_Central"/>
</dbReference>
<dbReference type="GO" id="GO:0007601">
    <property type="term" value="P:visual perception"/>
    <property type="evidence" value="ECO:0007669"/>
    <property type="project" value="UniProtKB-KW"/>
</dbReference>
<dbReference type="GO" id="GO:0016055">
    <property type="term" value="P:Wnt signaling pathway"/>
    <property type="evidence" value="ECO:0000315"/>
    <property type="project" value="UniProtKB"/>
</dbReference>
<dbReference type="CDD" id="cd04157">
    <property type="entry name" value="Arl6"/>
    <property type="match status" value="1"/>
</dbReference>
<dbReference type="FunFam" id="3.40.50.300:FF:000457">
    <property type="entry name" value="ADP-ribosylation factor-like protein 6"/>
    <property type="match status" value="1"/>
</dbReference>
<dbReference type="Gene3D" id="3.40.50.300">
    <property type="entry name" value="P-loop containing nucleotide triphosphate hydrolases"/>
    <property type="match status" value="1"/>
</dbReference>
<dbReference type="InterPro" id="IPR041839">
    <property type="entry name" value="Arl6"/>
</dbReference>
<dbReference type="InterPro" id="IPR027417">
    <property type="entry name" value="P-loop_NTPase"/>
</dbReference>
<dbReference type="InterPro" id="IPR005225">
    <property type="entry name" value="Small_GTP-bd"/>
</dbReference>
<dbReference type="InterPro" id="IPR024156">
    <property type="entry name" value="Small_GTPase_ARF"/>
</dbReference>
<dbReference type="InterPro" id="IPR006689">
    <property type="entry name" value="Small_GTPase_ARF/SAR"/>
</dbReference>
<dbReference type="NCBIfam" id="TIGR00231">
    <property type="entry name" value="small_GTP"/>
    <property type="match status" value="1"/>
</dbReference>
<dbReference type="PANTHER" id="PTHR11711">
    <property type="entry name" value="ADP RIBOSYLATION FACTOR-RELATED"/>
    <property type="match status" value="1"/>
</dbReference>
<dbReference type="Pfam" id="PF00025">
    <property type="entry name" value="Arf"/>
    <property type="match status" value="1"/>
</dbReference>
<dbReference type="PRINTS" id="PR00328">
    <property type="entry name" value="SAR1GTPBP"/>
</dbReference>
<dbReference type="SMART" id="SM00177">
    <property type="entry name" value="ARF"/>
    <property type="match status" value="1"/>
</dbReference>
<dbReference type="SMART" id="SM00178">
    <property type="entry name" value="SAR"/>
    <property type="match status" value="1"/>
</dbReference>
<dbReference type="SUPFAM" id="SSF52540">
    <property type="entry name" value="P-loop containing nucleoside triphosphate hydrolases"/>
    <property type="match status" value="1"/>
</dbReference>
<dbReference type="PROSITE" id="PS51417">
    <property type="entry name" value="ARF"/>
    <property type="match status" value="1"/>
</dbReference>
<sequence>MGLLDRLSVLLGLKKKEVHVLCLGLDNSGKTTIINKLKPSNAQSQNILPTIGFSIEKFKSSSLSFTVFDMSGQGRYRNLWEHYYKEGQAIIFVIDSSDRLRMVVAKEELDTLLNHPDIKHRRIPILFFANKMDLRDAVTSVKVSQLLCLENIKDKPWHICASDAIKGEGLQEGVDWLQDQIQTVKT</sequence>
<gene>
    <name type="primary">ARL6</name>
    <name type="synonym">BBS3</name>
</gene>
<accession>Q9H0F7</accession>
<accession>A8KA93</accession>
<accession>D3DN31</accession>
<feature type="initiator methionine" description="Removed" evidence="3">
    <location>
        <position position="1"/>
    </location>
</feature>
<feature type="chain" id="PRO_0000207472" description="ADP-ribosylation factor-like protein 6">
    <location>
        <begin position="2"/>
        <end position="186"/>
    </location>
</feature>
<feature type="binding site" evidence="8">
    <location>
        <begin position="24"/>
        <end position="31"/>
    </location>
    <ligand>
        <name>GTP</name>
        <dbReference type="ChEBI" id="CHEBI:37565"/>
    </ligand>
</feature>
<feature type="binding site" evidence="8">
    <location>
        <position position="31"/>
    </location>
    <ligand>
        <name>Mg(2+)</name>
        <dbReference type="ChEBI" id="CHEBI:18420"/>
    </ligand>
</feature>
<feature type="binding site" evidence="8">
    <location>
        <position position="50"/>
    </location>
    <ligand>
        <name>GTP</name>
        <dbReference type="ChEBI" id="CHEBI:37565"/>
    </ligand>
</feature>
<feature type="binding site" evidence="8">
    <location>
        <position position="50"/>
    </location>
    <ligand>
        <name>Mg(2+)</name>
        <dbReference type="ChEBI" id="CHEBI:18420"/>
    </ligand>
</feature>
<feature type="binding site" evidence="1">
    <location>
        <begin position="69"/>
        <end position="73"/>
    </location>
    <ligand>
        <name>GTP</name>
        <dbReference type="ChEBI" id="CHEBI:37565"/>
    </ligand>
</feature>
<feature type="binding site" evidence="8">
    <location>
        <position position="72"/>
    </location>
    <ligand>
        <name>GTP</name>
        <dbReference type="ChEBI" id="CHEBI:37565"/>
    </ligand>
</feature>
<feature type="binding site" evidence="8">
    <location>
        <begin position="130"/>
        <end position="133"/>
    </location>
    <ligand>
        <name>GTP</name>
        <dbReference type="ChEBI" id="CHEBI:37565"/>
    </ligand>
</feature>
<feature type="binding site" evidence="8">
    <location>
        <position position="164"/>
    </location>
    <ligand>
        <name>GTP</name>
        <dbReference type="ChEBI" id="CHEBI:37565"/>
    </ligand>
</feature>
<feature type="lipid moiety-binding region" description="N-myristoyl glycine" evidence="3">
    <location>
        <position position="2"/>
    </location>
</feature>
<feature type="splice variant" id="VSP_040511" description="In isoform 2." evidence="13">
    <original>DQIQTVKT</original>
    <variation>EKTIQSDPDCEDMKR</variation>
    <location>
        <begin position="179"/>
        <end position="186"/>
    </location>
</feature>
<feature type="sequence variant" id="VAR_027643" description="In BBS3; abrogates the GTP-binding ability without affecting GDP-binding/dissociating properties; increased proteasomal degradation; dbSNP:rs104893680." evidence="5 6 8">
    <original>T</original>
    <variation>M</variation>
    <location>
        <position position="31"/>
    </location>
</feature>
<feature type="sequence variant" id="VAR_027644" description="In BBS3; locked in a GDP-bound state that differs from its wild-type counterpart which is mainly GTP-bound; increased proteasomal degradation; dbSNP:rs104893680." evidence="5 6 8">
    <original>T</original>
    <variation>R</variation>
    <location>
        <position position="31"/>
    </location>
</feature>
<feature type="sequence variant" id="VAR_064184" description="In RP55; dbSNP:rs587777805." evidence="7">
    <original>A</original>
    <variation>V</variation>
    <location>
        <position position="89"/>
    </location>
</feature>
<feature type="sequence variant" id="VAR_071405" description="In BBS3; dbSNP:rs771054395." evidence="11">
    <original>I</original>
    <variation>T</variation>
    <location>
        <position position="94"/>
    </location>
</feature>
<feature type="sequence variant" id="VAR_027645" description="In BBS3; abrogates the GTP-binding ability; increased proteasomal degradation; dbSNP:rs104893679." evidence="5 6 8">
    <original>G</original>
    <variation>A</variation>
    <location>
        <position position="169"/>
    </location>
</feature>
<feature type="sequence variant" id="VAR_027646" description="In BBS3; abrogates the GTP-binding ability; increased proteasomal degradation; dbSNP:rs104893681." evidence="5 6 8">
    <original>L</original>
    <variation>W</variation>
    <location>
        <position position="170"/>
    </location>
</feature>
<feature type="strand" evidence="14">
    <location>
        <begin position="18"/>
        <end position="24"/>
    </location>
</feature>
<feature type="helix" evidence="14">
    <location>
        <begin position="30"/>
        <end position="36"/>
    </location>
</feature>
<feature type="helix" evidence="14">
    <location>
        <begin position="40"/>
        <end position="42"/>
    </location>
</feature>
<feature type="strand" evidence="14">
    <location>
        <begin position="51"/>
        <end position="59"/>
    </location>
</feature>
<feature type="strand" evidence="14">
    <location>
        <begin position="64"/>
        <end position="70"/>
    </location>
</feature>
<feature type="turn" evidence="14">
    <location>
        <begin position="74"/>
        <end position="76"/>
    </location>
</feature>
<feature type="helix" evidence="14">
    <location>
        <begin position="77"/>
        <end position="86"/>
    </location>
</feature>
<feature type="strand" evidence="14">
    <location>
        <begin position="88"/>
        <end position="95"/>
    </location>
</feature>
<feature type="helix" evidence="14">
    <location>
        <begin position="99"/>
        <end position="114"/>
    </location>
</feature>
<feature type="turn" evidence="14">
    <location>
        <begin position="116"/>
        <end position="120"/>
    </location>
</feature>
<feature type="strand" evidence="14">
    <location>
        <begin position="125"/>
        <end position="130"/>
    </location>
</feature>
<feature type="helix" evidence="14">
    <location>
        <begin position="140"/>
        <end position="147"/>
    </location>
</feature>
<feature type="helix" evidence="14">
    <location>
        <begin position="149"/>
        <end position="151"/>
    </location>
</feature>
<feature type="strand" evidence="14">
    <location>
        <begin position="157"/>
        <end position="161"/>
    </location>
</feature>
<feature type="turn" evidence="14">
    <location>
        <begin position="164"/>
        <end position="167"/>
    </location>
</feature>
<feature type="helix" evidence="14">
    <location>
        <begin position="170"/>
        <end position="180"/>
    </location>
</feature>
<name>ARL6_HUMAN</name>
<protein>
    <recommendedName>
        <fullName>ADP-ribosylation factor-like protein 6</fullName>
    </recommendedName>
    <alternativeName>
        <fullName>Bardet-Biedl syndrome 3 protein</fullName>
    </alternativeName>
</protein>
<organism>
    <name type="scientific">Homo sapiens</name>
    <name type="common">Human</name>
    <dbReference type="NCBI Taxonomy" id="9606"/>
    <lineage>
        <taxon>Eukaryota</taxon>
        <taxon>Metazoa</taxon>
        <taxon>Chordata</taxon>
        <taxon>Craniata</taxon>
        <taxon>Vertebrata</taxon>
        <taxon>Euteleostomi</taxon>
        <taxon>Mammalia</taxon>
        <taxon>Eutheria</taxon>
        <taxon>Euarchontoglires</taxon>
        <taxon>Primates</taxon>
        <taxon>Haplorrhini</taxon>
        <taxon>Catarrhini</taxon>
        <taxon>Hominidae</taxon>
        <taxon>Homo</taxon>
    </lineage>
</organism>
<evidence type="ECO:0000250" key="1"/>
<evidence type="ECO:0000250" key="2">
    <source>
        <dbReference type="UniProtKB" id="O88848"/>
    </source>
</evidence>
<evidence type="ECO:0000255" key="3"/>
<evidence type="ECO:0000269" key="4">
    <source>
    </source>
</evidence>
<evidence type="ECO:0000269" key="5">
    <source>
    </source>
</evidence>
<evidence type="ECO:0000269" key="6">
    <source>
    </source>
</evidence>
<evidence type="ECO:0000269" key="7">
    <source>
    </source>
</evidence>
<evidence type="ECO:0000269" key="8">
    <source>
    </source>
</evidence>
<evidence type="ECO:0000269" key="9">
    <source>
    </source>
</evidence>
<evidence type="ECO:0000269" key="10">
    <source>
    </source>
</evidence>
<evidence type="ECO:0000269" key="11">
    <source>
    </source>
</evidence>
<evidence type="ECO:0000269" key="12">
    <source>
    </source>
</evidence>
<evidence type="ECO:0000305" key="13"/>
<evidence type="ECO:0007829" key="14">
    <source>
        <dbReference type="PDB" id="2H57"/>
    </source>
</evidence>